<proteinExistence type="inferred from homology"/>
<protein>
    <recommendedName>
        <fullName>Protein transport protein sec31</fullName>
    </recommendedName>
</protein>
<organism>
    <name type="scientific">Aspergillus oryzae (strain ATCC 42149 / RIB 40)</name>
    <name type="common">Yellow koji mold</name>
    <dbReference type="NCBI Taxonomy" id="510516"/>
    <lineage>
        <taxon>Eukaryota</taxon>
        <taxon>Fungi</taxon>
        <taxon>Dikarya</taxon>
        <taxon>Ascomycota</taxon>
        <taxon>Pezizomycotina</taxon>
        <taxon>Eurotiomycetes</taxon>
        <taxon>Eurotiomycetidae</taxon>
        <taxon>Eurotiales</taxon>
        <taxon>Aspergillaceae</taxon>
        <taxon>Aspergillus</taxon>
        <taxon>Aspergillus subgen. Circumdati</taxon>
    </lineage>
</organism>
<comment type="function">
    <text evidence="1">Component of the coat protein complex II (COPII) which promotes the formation of transport vesicles from the endoplasmic reticulum (ER). The coat has two main functions, the physical deformation of the endoplasmic reticulum membrane into vesicles and the selection of cargo molecules (By similarity).</text>
</comment>
<comment type="subunit">
    <text evidence="1">The COPII coat is composed of at least 5 proteins: the sec23/24 complex, the sec13/31 complex, and the protein sar1. sec13 and sec31 make a 2:2 tetramer that forms the edge element of the COPII outer coat. The tetramer self-assembles in multiple copies to form the complete polyhedral cage. Interacts (via WD 8) with sec13 (By similarity).</text>
</comment>
<comment type="subcellular location">
    <subcellularLocation>
        <location evidence="1">Cytoplasmic vesicle</location>
        <location evidence="1">COPII-coated vesicle membrane</location>
        <topology evidence="1">Peripheral membrane protein</topology>
        <orientation evidence="1">Cytoplasmic side</orientation>
    </subcellularLocation>
    <subcellularLocation>
        <location evidence="1">Endoplasmic reticulum membrane</location>
        <topology evidence="1">Peripheral membrane protein</topology>
        <orientation evidence="1">Cytoplasmic side</orientation>
    </subcellularLocation>
</comment>
<comment type="similarity">
    <text evidence="4">Belongs to the WD repeat SEC31 family.</text>
</comment>
<comment type="sequence caution" evidence="4">
    <conflict type="erroneous gene model prediction">
        <sequence resource="EMBL-CDS" id="BAE59805"/>
    </conflict>
</comment>
<keyword id="KW-0968">Cytoplasmic vesicle</keyword>
<keyword id="KW-0256">Endoplasmic reticulum</keyword>
<keyword id="KW-0931">ER-Golgi transport</keyword>
<keyword id="KW-0472">Membrane</keyword>
<keyword id="KW-0653">Protein transport</keyword>
<keyword id="KW-1185">Reference proteome</keyword>
<keyword id="KW-0677">Repeat</keyword>
<keyword id="KW-0813">Transport</keyword>
<keyword id="KW-0853">WD repeat</keyword>
<accession>Q2UF60</accession>
<feature type="chain" id="PRO_0000295430" description="Protein transport protein sec31">
    <location>
        <begin position="1"/>
        <end position="1273"/>
    </location>
</feature>
<feature type="repeat" description="WD 1">
    <location>
        <begin position="5"/>
        <end position="47"/>
    </location>
</feature>
<feature type="repeat" description="WD 2">
    <location>
        <begin position="66"/>
        <end position="109"/>
    </location>
</feature>
<feature type="repeat" description="WD 3">
    <location>
        <begin position="119"/>
        <end position="159"/>
    </location>
</feature>
<feature type="repeat" description="WD 4">
    <location>
        <begin position="164"/>
        <end position="204"/>
    </location>
</feature>
<feature type="repeat" description="WD 5">
    <location>
        <begin position="208"/>
        <end position="251"/>
    </location>
</feature>
<feature type="repeat" description="WD 6">
    <location>
        <begin position="255"/>
        <end position="295"/>
    </location>
</feature>
<feature type="repeat" description="WD 7">
    <location>
        <begin position="298"/>
        <end position="338"/>
    </location>
</feature>
<feature type="repeat" description="WD 8; interaction with sec13" evidence="2">
    <location>
        <begin position="382"/>
        <end position="407"/>
    </location>
</feature>
<feature type="region of interest" description="Disordered" evidence="3">
    <location>
        <begin position="488"/>
        <end position="509"/>
    </location>
</feature>
<feature type="region of interest" description="Disordered" evidence="3">
    <location>
        <begin position="796"/>
        <end position="829"/>
    </location>
</feature>
<feature type="region of interest" description="Disordered" evidence="3">
    <location>
        <begin position="881"/>
        <end position="1168"/>
    </location>
</feature>
<feature type="compositionally biased region" description="Basic and acidic residues" evidence="3">
    <location>
        <begin position="490"/>
        <end position="503"/>
    </location>
</feature>
<feature type="compositionally biased region" description="Low complexity" evidence="3">
    <location>
        <begin position="798"/>
        <end position="817"/>
    </location>
</feature>
<feature type="compositionally biased region" description="Pro residues" evidence="3">
    <location>
        <begin position="881"/>
        <end position="900"/>
    </location>
</feature>
<feature type="compositionally biased region" description="Low complexity" evidence="3">
    <location>
        <begin position="943"/>
        <end position="952"/>
    </location>
</feature>
<feature type="compositionally biased region" description="Low complexity" evidence="3">
    <location>
        <begin position="967"/>
        <end position="981"/>
    </location>
</feature>
<feature type="compositionally biased region" description="Pro residues" evidence="3">
    <location>
        <begin position="1010"/>
        <end position="1052"/>
    </location>
</feature>
<feature type="compositionally biased region" description="Pro residues" evidence="3">
    <location>
        <begin position="1061"/>
        <end position="1080"/>
    </location>
</feature>
<feature type="compositionally biased region" description="Low complexity" evidence="3">
    <location>
        <begin position="1084"/>
        <end position="1098"/>
    </location>
</feature>
<feature type="compositionally biased region" description="Low complexity" evidence="3">
    <location>
        <begin position="1108"/>
        <end position="1125"/>
    </location>
</feature>
<feature type="compositionally biased region" description="Pro residues" evidence="3">
    <location>
        <begin position="1126"/>
        <end position="1137"/>
    </location>
</feature>
<feature type="compositionally biased region" description="Polar residues" evidence="3">
    <location>
        <begin position="1140"/>
        <end position="1150"/>
    </location>
</feature>
<reference key="1">
    <citation type="journal article" date="2005" name="Nature">
        <title>Genome sequencing and analysis of Aspergillus oryzae.</title>
        <authorList>
            <person name="Machida M."/>
            <person name="Asai K."/>
            <person name="Sano M."/>
            <person name="Tanaka T."/>
            <person name="Kumagai T."/>
            <person name="Terai G."/>
            <person name="Kusumoto K."/>
            <person name="Arima T."/>
            <person name="Akita O."/>
            <person name="Kashiwagi Y."/>
            <person name="Abe K."/>
            <person name="Gomi K."/>
            <person name="Horiuchi H."/>
            <person name="Kitamoto K."/>
            <person name="Kobayashi T."/>
            <person name="Takeuchi M."/>
            <person name="Denning D.W."/>
            <person name="Galagan J.E."/>
            <person name="Nierman W.C."/>
            <person name="Yu J."/>
            <person name="Archer D.B."/>
            <person name="Bennett J.W."/>
            <person name="Bhatnagar D."/>
            <person name="Cleveland T.E."/>
            <person name="Fedorova N.D."/>
            <person name="Gotoh O."/>
            <person name="Horikawa H."/>
            <person name="Hosoyama A."/>
            <person name="Ichinomiya M."/>
            <person name="Igarashi R."/>
            <person name="Iwashita K."/>
            <person name="Juvvadi P.R."/>
            <person name="Kato M."/>
            <person name="Kato Y."/>
            <person name="Kin T."/>
            <person name="Kokubun A."/>
            <person name="Maeda H."/>
            <person name="Maeyama N."/>
            <person name="Maruyama J."/>
            <person name="Nagasaki H."/>
            <person name="Nakajima T."/>
            <person name="Oda K."/>
            <person name="Okada K."/>
            <person name="Paulsen I."/>
            <person name="Sakamoto K."/>
            <person name="Sawano T."/>
            <person name="Takahashi M."/>
            <person name="Takase K."/>
            <person name="Terabayashi Y."/>
            <person name="Wortman J.R."/>
            <person name="Yamada O."/>
            <person name="Yamagata Y."/>
            <person name="Anazawa H."/>
            <person name="Hata Y."/>
            <person name="Koide Y."/>
            <person name="Komori T."/>
            <person name="Koyama Y."/>
            <person name="Minetoki T."/>
            <person name="Suharnan S."/>
            <person name="Tanaka A."/>
            <person name="Isono K."/>
            <person name="Kuhara S."/>
            <person name="Ogasawara N."/>
            <person name="Kikuchi H."/>
        </authorList>
    </citation>
    <scope>NUCLEOTIDE SEQUENCE [LARGE SCALE GENOMIC DNA]</scope>
    <source>
        <strain>ATCC 42149 / RIB 40</strain>
    </source>
</reference>
<gene>
    <name type="primary">sec31</name>
    <name type="ORF">AO090026000337</name>
</gene>
<name>SEC31_ASPOR</name>
<evidence type="ECO:0000250" key="1"/>
<evidence type="ECO:0000255" key="2">
    <source>
        <dbReference type="PROSITE-ProRule" id="PRU00221"/>
    </source>
</evidence>
<evidence type="ECO:0000256" key="3">
    <source>
        <dbReference type="SAM" id="MobiDB-lite"/>
    </source>
</evidence>
<evidence type="ECO:0000305" key="4"/>
<sequence>MVRLREIPRTATFAWSPGAASPLIATGTRAGAVDVDFSNETCLELWDLGLDRQSTGEELQPIAKFDTDSGFNDLAWTPSEDNTRGIIAGALESGSLDLWDADKLINGSSDDAVISRTSKHSGAIKALQFNPRHSNLLATGGAKGELYISDLNNVANPYRLGTAARADDIECLDWNKKVAHILVTGSSAGFVTVWDVKTKKESLTLNNMGRKAVSAVAWDPEKPTKLVTATPLESDPMIYVWDLRNSHAPERVLKGHESGVLSLSWCSHDPDLLLSSGKDNRTLCWNPQTGHAYGEFPVVTNWTFQTRWNPHNPNFFATASFDGKIAVQTVQNTSTDTAQAIADQNQALDGEDFFAKAQTQPQVSSFSLPKAPKWLERPCGATFGFGGRVVSVNLVEKGQRASKIKITPFEVDEAVGQSTETFENALKEGDLRSICETRAANAATEEEKADWKVIQALISENPRKGLAEYLGFQDQSADEAADKLANLGLGKEETNGESPKESRGPGAKKHKRLQSMFDASPEADNFLSDLAASKGAKTNNPFHIFNGSETEADKGITRALLLGDFEKALDVSLKEDRLSDAFMIAICGGQKCIAKAQEHYFSKQTESPNYVRLLASIVGKNLWDVVYNADLSNWKEVMAALCTFAEEKEFADLCDALGDRLEEQIRASDDKSLRKDASFCFLAGSKLEKVVAIWIEELRENEQKALETAANDTSFSIHVRALQGLIEKVTIFRQVTKFQDTERTKESDWKLSNLYDKYIEYADVVATHGRLQVAQKYLDLVPEKHPEAEVARNRIKLATRQPTAQKTQQTTTGRGTPLNKPLPTTNAYQPQRTFSPVATAAAPSPYAPPAPTTNAYAPPAAATNPYAPPAAATNPYAPPAPASNPYAPPGAAAPPQPTNPYAPASGGSYAPTGYQPTPAPSYGAKPLGGSVPPPPRASNQSPATVTTYTTATNLPAWNDLPEGFAKAPTPRRGTPAGAAAPISSPFPNQSPSIAQGPPPPGAPPTQRTPSVPPPPKGTAPPPRVTSPPSAIPPGPTPPPNPYASLPQSPPQLNPGTMGVPAPIPRGPSPYNAPPSMPPPTNRYAPSPAAQAANPQLQARGPVPPPPQAAASPYAPQPPAASQYAPSTPPLQQGPPPASTSRPGTASSQKVTPAPATPKYPPGDRSHIPEDAMPIYEILSADMQRIKGRAPTSFKQQVEDADRRLNLLFDHLNNGDLLKPNTVSDMADLARAIQARDYEAARAIHVDILTNRTDECGQWMVGVKRLISMSKATP</sequence>
<dbReference type="EMBL" id="BA000051">
    <property type="protein sequence ID" value="BAE59805.1"/>
    <property type="status" value="ALT_SEQ"/>
    <property type="molecule type" value="Genomic_DNA"/>
</dbReference>
<dbReference type="RefSeq" id="XP_001821807.2">
    <property type="nucleotide sequence ID" value="XM_001821755.2"/>
</dbReference>
<dbReference type="SMR" id="Q2UF60"/>
<dbReference type="STRING" id="510516.Q2UF60"/>
<dbReference type="VEuPathDB" id="FungiDB:AO090026000337"/>
<dbReference type="Proteomes" id="UP000006564">
    <property type="component" value="Chromosome 3"/>
</dbReference>
<dbReference type="GO" id="GO:0030127">
    <property type="term" value="C:COPII vesicle coat"/>
    <property type="evidence" value="ECO:0007669"/>
    <property type="project" value="TreeGrafter"/>
</dbReference>
<dbReference type="GO" id="GO:0070971">
    <property type="term" value="C:endoplasmic reticulum exit site"/>
    <property type="evidence" value="ECO:0007669"/>
    <property type="project" value="TreeGrafter"/>
</dbReference>
<dbReference type="GO" id="GO:0005789">
    <property type="term" value="C:endoplasmic reticulum membrane"/>
    <property type="evidence" value="ECO:0007669"/>
    <property type="project" value="UniProtKB-SubCell"/>
</dbReference>
<dbReference type="GO" id="GO:0005198">
    <property type="term" value="F:structural molecule activity"/>
    <property type="evidence" value="ECO:0007669"/>
    <property type="project" value="TreeGrafter"/>
</dbReference>
<dbReference type="GO" id="GO:0090110">
    <property type="term" value="P:COPII-coated vesicle cargo loading"/>
    <property type="evidence" value="ECO:0007669"/>
    <property type="project" value="TreeGrafter"/>
</dbReference>
<dbReference type="GO" id="GO:0007029">
    <property type="term" value="P:endoplasmic reticulum organization"/>
    <property type="evidence" value="ECO:0007669"/>
    <property type="project" value="TreeGrafter"/>
</dbReference>
<dbReference type="GO" id="GO:0015031">
    <property type="term" value="P:protein transport"/>
    <property type="evidence" value="ECO:0007669"/>
    <property type="project" value="UniProtKB-KW"/>
</dbReference>
<dbReference type="FunFam" id="1.20.940.10:FF:000007">
    <property type="entry name" value="Protein transport protein (SEC31), putative"/>
    <property type="match status" value="1"/>
</dbReference>
<dbReference type="FunFam" id="2.130.10.10:FF:000193">
    <property type="entry name" value="Protein transport protein SEC31, putative"/>
    <property type="match status" value="1"/>
</dbReference>
<dbReference type="Gene3D" id="1.25.40.1030">
    <property type="match status" value="1"/>
</dbReference>
<dbReference type="Gene3D" id="1.20.940.10">
    <property type="entry name" value="Functional domain of the splicing factor Prp18"/>
    <property type="match status" value="1"/>
</dbReference>
<dbReference type="Gene3D" id="2.130.10.10">
    <property type="entry name" value="YVTN repeat-like/Quinoprotein amine dehydrogenase"/>
    <property type="match status" value="1"/>
</dbReference>
<dbReference type="InterPro" id="IPR040251">
    <property type="entry name" value="SEC31-like"/>
</dbReference>
<dbReference type="InterPro" id="IPR009917">
    <property type="entry name" value="SRA1/Sec31"/>
</dbReference>
<dbReference type="InterPro" id="IPR015943">
    <property type="entry name" value="WD40/YVTN_repeat-like_dom_sf"/>
</dbReference>
<dbReference type="InterPro" id="IPR036322">
    <property type="entry name" value="WD40_repeat_dom_sf"/>
</dbReference>
<dbReference type="InterPro" id="IPR001680">
    <property type="entry name" value="WD40_rpt"/>
</dbReference>
<dbReference type="PANTHER" id="PTHR13923">
    <property type="entry name" value="SEC31-RELATED PROTEIN"/>
    <property type="match status" value="1"/>
</dbReference>
<dbReference type="PANTHER" id="PTHR13923:SF11">
    <property type="entry name" value="SECRETORY 31, ISOFORM D"/>
    <property type="match status" value="1"/>
</dbReference>
<dbReference type="Pfam" id="PF07304">
    <property type="entry name" value="SRA1"/>
    <property type="match status" value="1"/>
</dbReference>
<dbReference type="Pfam" id="PF00400">
    <property type="entry name" value="WD40"/>
    <property type="match status" value="1"/>
</dbReference>
<dbReference type="SMART" id="SM00320">
    <property type="entry name" value="WD40"/>
    <property type="match status" value="6"/>
</dbReference>
<dbReference type="SUPFAM" id="SSF50978">
    <property type="entry name" value="WD40 repeat-like"/>
    <property type="match status" value="1"/>
</dbReference>
<dbReference type="PROSITE" id="PS50082">
    <property type="entry name" value="WD_REPEATS_2"/>
    <property type="match status" value="2"/>
</dbReference>
<dbReference type="PROSITE" id="PS50294">
    <property type="entry name" value="WD_REPEATS_REGION"/>
    <property type="match status" value="1"/>
</dbReference>